<organism>
    <name type="scientific">Influenza A virus (strain A/Turkey/Minnesota/501/1978 H6N8)</name>
    <dbReference type="NCBI Taxonomy" id="387259"/>
    <lineage>
        <taxon>Viruses</taxon>
        <taxon>Riboviria</taxon>
        <taxon>Orthornavirae</taxon>
        <taxon>Negarnaviricota</taxon>
        <taxon>Polyploviricotina</taxon>
        <taxon>Insthoviricetes</taxon>
        <taxon>Articulavirales</taxon>
        <taxon>Orthomyxoviridae</taxon>
        <taxon>Alphainfluenzavirus</taxon>
        <taxon>Alphainfluenzavirus influenzae</taxon>
        <taxon>Influenza A virus</taxon>
    </lineage>
</organism>
<name>RDRP_I78AC</name>
<gene>
    <name evidence="1" type="primary">PB1</name>
</gene>
<dbReference type="EC" id="2.7.7.48" evidence="1"/>
<dbReference type="EMBL" id="CY014777">
    <property type="protein sequence ID" value="ABI84681.1"/>
    <property type="molecule type" value="Genomic_RNA"/>
</dbReference>
<dbReference type="SMR" id="Q0A3Q1"/>
<dbReference type="GO" id="GO:0030430">
    <property type="term" value="C:host cell cytoplasm"/>
    <property type="evidence" value="ECO:0007669"/>
    <property type="project" value="UniProtKB-SubCell"/>
</dbReference>
<dbReference type="GO" id="GO:0042025">
    <property type="term" value="C:host cell nucleus"/>
    <property type="evidence" value="ECO:0007669"/>
    <property type="project" value="UniProtKB-SubCell"/>
</dbReference>
<dbReference type="GO" id="GO:0000166">
    <property type="term" value="F:nucleotide binding"/>
    <property type="evidence" value="ECO:0007669"/>
    <property type="project" value="UniProtKB-UniRule"/>
</dbReference>
<dbReference type="GO" id="GO:0003723">
    <property type="term" value="F:RNA binding"/>
    <property type="evidence" value="ECO:0007669"/>
    <property type="project" value="InterPro"/>
</dbReference>
<dbReference type="GO" id="GO:0003968">
    <property type="term" value="F:RNA-directed RNA polymerase activity"/>
    <property type="evidence" value="ECO:0007669"/>
    <property type="project" value="UniProtKB-UniRule"/>
</dbReference>
<dbReference type="GO" id="GO:0006351">
    <property type="term" value="P:DNA-templated transcription"/>
    <property type="evidence" value="ECO:0007669"/>
    <property type="project" value="UniProtKB-UniRule"/>
</dbReference>
<dbReference type="GO" id="GO:0039657">
    <property type="term" value="P:symbiont-mediated suppression of host gene expression"/>
    <property type="evidence" value="ECO:0007669"/>
    <property type="project" value="UniProtKB-KW"/>
</dbReference>
<dbReference type="GO" id="GO:0039523">
    <property type="term" value="P:symbiont-mediated suppression of host mRNA transcription via inhibition of RNA polymerase II activity"/>
    <property type="evidence" value="ECO:0007669"/>
    <property type="project" value="UniProtKB-UniRule"/>
</dbReference>
<dbReference type="GO" id="GO:0039694">
    <property type="term" value="P:viral RNA genome replication"/>
    <property type="evidence" value="ECO:0007669"/>
    <property type="project" value="UniProtKB-UniRule"/>
</dbReference>
<dbReference type="GO" id="GO:0019083">
    <property type="term" value="P:viral transcription"/>
    <property type="evidence" value="ECO:0007669"/>
    <property type="project" value="UniProtKB-KW"/>
</dbReference>
<dbReference type="Gene3D" id="6.10.140.720">
    <property type="match status" value="1"/>
</dbReference>
<dbReference type="HAMAP" id="MF_04065">
    <property type="entry name" value="INFV_RDRP"/>
    <property type="match status" value="1"/>
</dbReference>
<dbReference type="InterPro" id="IPR007099">
    <property type="entry name" value="RNA-dir_pol_NSvirus"/>
</dbReference>
<dbReference type="InterPro" id="IPR001407">
    <property type="entry name" value="RNA_pol_PB1_influenza"/>
</dbReference>
<dbReference type="Pfam" id="PF00602">
    <property type="entry name" value="Flu_PB1"/>
    <property type="match status" value="1"/>
</dbReference>
<dbReference type="PIRSF" id="PIRSF000827">
    <property type="entry name" value="RdRPol_OMV"/>
    <property type="match status" value="1"/>
</dbReference>
<dbReference type="PROSITE" id="PS50525">
    <property type="entry name" value="RDRP_SSRNA_NEG_SEG"/>
    <property type="match status" value="1"/>
</dbReference>
<proteinExistence type="inferred from homology"/>
<reference key="1">
    <citation type="journal article" date="2006" name="Science">
        <title>Large-scale sequence analysis of avian influenza isolates.</title>
        <authorList>
            <person name="Obenauer J.C."/>
            <person name="Denson J."/>
            <person name="Mehta P.K."/>
            <person name="Su X."/>
            <person name="Mukatira S."/>
            <person name="Finkelstein D.B."/>
            <person name="Xu X."/>
            <person name="Wang J."/>
            <person name="Ma J."/>
            <person name="Fan Y."/>
            <person name="Rakestraw K.M."/>
            <person name="Webster R.G."/>
            <person name="Hoffmann E."/>
            <person name="Krauss S."/>
            <person name="Zheng J."/>
            <person name="Zhang Z."/>
            <person name="Naeve C.W."/>
        </authorList>
    </citation>
    <scope>NUCLEOTIDE SEQUENCE [GENOMIC RNA]</scope>
</reference>
<feature type="chain" id="PRO_0000279613" description="RNA-directed RNA polymerase catalytic subunit">
    <location>
        <begin position="1"/>
        <end position="757"/>
    </location>
</feature>
<feature type="domain" description="RdRp catalytic" evidence="1">
    <location>
        <begin position="286"/>
        <end position="483"/>
    </location>
</feature>
<feature type="region of interest" description="Disordered" evidence="2">
    <location>
        <begin position="50"/>
        <end position="82"/>
    </location>
</feature>
<feature type="region of interest" description="Promoter-binding site" evidence="1">
    <location>
        <begin position="249"/>
        <end position="256"/>
    </location>
</feature>
<feature type="short sequence motif" description="Nuclear localization signal" evidence="1">
    <location>
        <begin position="187"/>
        <end position="195"/>
    </location>
</feature>
<feature type="short sequence motif" description="Nuclear localization signal" evidence="1">
    <location>
        <begin position="203"/>
        <end position="216"/>
    </location>
</feature>
<feature type="compositionally biased region" description="Polar residues" evidence="2">
    <location>
        <begin position="55"/>
        <end position="64"/>
    </location>
</feature>
<organismHost>
    <name type="scientific">Aves</name>
    <dbReference type="NCBI Taxonomy" id="8782"/>
</organismHost>
<sequence>MDVNPTLLFLKVPAQNAISTTFPYTGDPPYSHGTGTGYTMDTVNRTHQYSEKGKWTTNTETGAPQLNPIDGPLPEDNEPSGYAQTDCVLEAMAFLEESHPGIFENSCLETMEVVQQTRVDKLTQGRQTYDWTLNRNQPAATALANTIEVFRSNGLTANESGRLIDFLKDVMESMDKEGMEITTHFQRKRRVRDNMTKKMVTQRTIGKKKQRLNKRSYLIRALTLNTMTKDAERGKLKRRAIATPGMQIRGFVYFVETLARSICEKLEQSGLPVGGNEKKAKLANVVRKMMTNSQDTELSFTITGDNTKWNENQNPRMFLAMITYITRNQPEWFRNVLSIAPIMFSNKMARLGKGYMFESKSMKLRTQIPAEMLANIDLKYFNESTRKKIEKIRPLLIDGTASLSPGMMMGMFNMLSTVLGVSILNLGQKRYTKTTYWWDGLQSSDDFALIVNAPNHEGIQAGVDRFYRTCKLVGINMSKKKSYINRTGTFEFTSFFYRYGFVANFSMELPSFGVSGINESADMSIGVTVIKNNMINNDLGPATAQMALQLFIKDYRYTYRCHRGDTQIQTRRSFELKKLWEQTRSKAGLLVSDGGPNLYNIRNLHIPEVCLKWELMDEDYQGRLCNPLNPFVSHKEIESVNNAVVMPAHGPAKSMEYDAVATTHSWIPKRNRSILNTSQRGILEDEQMYQKCCNLFEKFFPSSSYRRPVGISSMVEAMVSRARIDARIDFESGRIKKEEFAEIMKICSTIEELRRQK</sequence>
<evidence type="ECO:0000255" key="1">
    <source>
        <dbReference type="HAMAP-Rule" id="MF_04065"/>
    </source>
</evidence>
<evidence type="ECO:0000256" key="2">
    <source>
        <dbReference type="SAM" id="MobiDB-lite"/>
    </source>
</evidence>
<accession>Q0A3Q1</accession>
<protein>
    <recommendedName>
        <fullName evidence="1">RNA-directed RNA polymerase catalytic subunit</fullName>
        <ecNumber evidence="1">2.7.7.48</ecNumber>
    </recommendedName>
    <alternativeName>
        <fullName evidence="1">Polymerase basic protein 1</fullName>
        <shortName evidence="1">PB1</shortName>
    </alternativeName>
    <alternativeName>
        <fullName evidence="1">RNA-directed RNA polymerase subunit P1</fullName>
    </alternativeName>
</protein>
<keyword id="KW-1262">Eukaryotic host gene expression shutoff by virus</keyword>
<keyword id="KW-1191">Eukaryotic host transcription shutoff by virus</keyword>
<keyword id="KW-1035">Host cytoplasm</keyword>
<keyword id="KW-1190">Host gene expression shutoff by virus</keyword>
<keyword id="KW-1048">Host nucleus</keyword>
<keyword id="KW-0945">Host-virus interaction</keyword>
<keyword id="KW-1104">Inhibition of host RNA polymerase II by virus</keyword>
<keyword id="KW-0547">Nucleotide-binding</keyword>
<keyword id="KW-0548">Nucleotidyltransferase</keyword>
<keyword id="KW-0597">Phosphoprotein</keyword>
<keyword id="KW-0696">RNA-directed RNA polymerase</keyword>
<keyword id="KW-0808">Transferase</keyword>
<keyword id="KW-0693">Viral RNA replication</keyword>
<keyword id="KW-1195">Viral transcription</keyword>
<comment type="function">
    <text evidence="1">RNA-dependent RNA polymerase which is responsible for replication and transcription of virus RNA segments. The transcription of viral mRNAs occurs by a unique mechanism called cap-snatching. 5' methylated caps of cellular mRNAs are cleaved after 10-13 nucleotides by PA. In turn, these short capped RNAs are used as primers by PB1 for transcription of viral mRNAs. During virus replication, PB1 initiates RNA synthesis and copy vRNA into complementary RNA (cRNA) which in turn serves as a template for the production of more vRNAs.</text>
</comment>
<comment type="catalytic activity">
    <reaction evidence="1">
        <text>RNA(n) + a ribonucleoside 5'-triphosphate = RNA(n+1) + diphosphate</text>
        <dbReference type="Rhea" id="RHEA:21248"/>
        <dbReference type="Rhea" id="RHEA-COMP:14527"/>
        <dbReference type="Rhea" id="RHEA-COMP:17342"/>
        <dbReference type="ChEBI" id="CHEBI:33019"/>
        <dbReference type="ChEBI" id="CHEBI:61557"/>
        <dbReference type="ChEBI" id="CHEBI:140395"/>
        <dbReference type="EC" id="2.7.7.48"/>
    </reaction>
</comment>
<comment type="subunit">
    <text evidence="1">Influenza RNA polymerase is composed of three subunits: PB1, PB2 and PA. Interacts (via N-terminus) with PA (via C-terminus). Interacts (via C-terminus) with PB2 (via N-terminus); this interaction is essential for transcription initiation.</text>
</comment>
<comment type="subcellular location">
    <subcellularLocation>
        <location evidence="1">Host nucleus</location>
    </subcellularLocation>
    <subcellularLocation>
        <location evidence="1">Host cytoplasm</location>
    </subcellularLocation>
</comment>
<comment type="PTM">
    <text evidence="1">Phosphorylated by host PRKCA.</text>
</comment>
<comment type="similarity">
    <text evidence="1">Belongs to the influenza viruses polymerase PB1 family.</text>
</comment>